<organism>
    <name type="scientific">Moorella thermoacetica (strain ATCC 39073 / JCM 9320)</name>
    <dbReference type="NCBI Taxonomy" id="264732"/>
    <lineage>
        <taxon>Bacteria</taxon>
        <taxon>Bacillati</taxon>
        <taxon>Bacillota</taxon>
        <taxon>Clostridia</taxon>
        <taxon>Moorellales</taxon>
        <taxon>Moorellaceae</taxon>
        <taxon>Moorella</taxon>
    </lineage>
</organism>
<evidence type="ECO:0000255" key="1">
    <source>
        <dbReference type="HAMAP-Rule" id="MF_00086"/>
    </source>
</evidence>
<gene>
    <name evidence="1" type="primary">metK</name>
    <name type="ordered locus">Moth_0894</name>
</gene>
<name>METK_MOOTA</name>
<accession>Q2RK28</accession>
<keyword id="KW-0067">ATP-binding</keyword>
<keyword id="KW-0963">Cytoplasm</keyword>
<keyword id="KW-0460">Magnesium</keyword>
<keyword id="KW-0479">Metal-binding</keyword>
<keyword id="KW-0547">Nucleotide-binding</keyword>
<keyword id="KW-0554">One-carbon metabolism</keyword>
<keyword id="KW-0630">Potassium</keyword>
<keyword id="KW-0808">Transferase</keyword>
<proteinExistence type="inferred from homology"/>
<feature type="chain" id="PRO_0000241005" description="S-adenosylmethionine synthase">
    <location>
        <begin position="1"/>
        <end position="395"/>
    </location>
</feature>
<feature type="region of interest" description="Flexible loop" evidence="1">
    <location>
        <begin position="99"/>
        <end position="109"/>
    </location>
</feature>
<feature type="binding site" description="in other chain" evidence="1">
    <location>
        <position position="15"/>
    </location>
    <ligand>
        <name>ATP</name>
        <dbReference type="ChEBI" id="CHEBI:30616"/>
        <note>ligand shared between two neighboring subunits</note>
    </ligand>
</feature>
<feature type="binding site" evidence="1">
    <location>
        <position position="17"/>
    </location>
    <ligand>
        <name>Mg(2+)</name>
        <dbReference type="ChEBI" id="CHEBI:18420"/>
    </ligand>
</feature>
<feature type="binding site" evidence="1">
    <location>
        <position position="43"/>
    </location>
    <ligand>
        <name>K(+)</name>
        <dbReference type="ChEBI" id="CHEBI:29103"/>
    </ligand>
</feature>
<feature type="binding site" description="in other chain" evidence="1">
    <location>
        <position position="99"/>
    </location>
    <ligand>
        <name>L-methionine</name>
        <dbReference type="ChEBI" id="CHEBI:57844"/>
        <note>ligand shared between two neighboring subunits</note>
    </ligand>
</feature>
<feature type="binding site" description="in other chain" evidence="1">
    <location>
        <begin position="174"/>
        <end position="176"/>
    </location>
    <ligand>
        <name>ATP</name>
        <dbReference type="ChEBI" id="CHEBI:30616"/>
        <note>ligand shared between two neighboring subunits</note>
    </ligand>
</feature>
<feature type="binding site" description="in other chain" evidence="1">
    <location>
        <begin position="240"/>
        <end position="241"/>
    </location>
    <ligand>
        <name>ATP</name>
        <dbReference type="ChEBI" id="CHEBI:30616"/>
        <note>ligand shared between two neighboring subunits</note>
    </ligand>
</feature>
<feature type="binding site" evidence="1">
    <location>
        <position position="249"/>
    </location>
    <ligand>
        <name>ATP</name>
        <dbReference type="ChEBI" id="CHEBI:30616"/>
        <note>ligand shared between two neighboring subunits</note>
    </ligand>
</feature>
<feature type="binding site" evidence="1">
    <location>
        <position position="249"/>
    </location>
    <ligand>
        <name>L-methionine</name>
        <dbReference type="ChEBI" id="CHEBI:57844"/>
        <note>ligand shared between two neighboring subunits</note>
    </ligand>
</feature>
<feature type="binding site" description="in other chain" evidence="1">
    <location>
        <begin position="255"/>
        <end position="256"/>
    </location>
    <ligand>
        <name>ATP</name>
        <dbReference type="ChEBI" id="CHEBI:30616"/>
        <note>ligand shared between two neighboring subunits</note>
    </ligand>
</feature>
<feature type="binding site" evidence="1">
    <location>
        <position position="272"/>
    </location>
    <ligand>
        <name>ATP</name>
        <dbReference type="ChEBI" id="CHEBI:30616"/>
        <note>ligand shared between two neighboring subunits</note>
    </ligand>
</feature>
<feature type="binding site" evidence="1">
    <location>
        <position position="276"/>
    </location>
    <ligand>
        <name>ATP</name>
        <dbReference type="ChEBI" id="CHEBI:30616"/>
        <note>ligand shared between two neighboring subunits</note>
    </ligand>
</feature>
<feature type="binding site" description="in other chain" evidence="1">
    <location>
        <position position="280"/>
    </location>
    <ligand>
        <name>L-methionine</name>
        <dbReference type="ChEBI" id="CHEBI:57844"/>
        <note>ligand shared between two neighboring subunits</note>
    </ligand>
</feature>
<sequence>MTRKLFTSESVTEGHPDKIADRIADAVLDAIYAKDNQARVACECLVSTGLILVAGQITTDCYVDIPRVARETVREIGYTRAKFGFDCDTCAVITSIDEQSPDIAMGVNEAWEKKQGEARDEVETLGAGDQGMMFGYATSETPEFMPMPIALAHALTRRLAAVRKERILPYLRPDGKSQVTVEYEDGRPVRVDTVVISTQHRPDIDMATLRDEVLETVIKPVIPAEMLDNRTRYFINPTGRFVIGGPQGDTGLTGRKLIVDTYGGMARHGGGALSGKDPTKVDRSAAYAARYVAKNVVAAGLADRCEVQVAYAIGVARPVSISVETFGTGKVSDDRLVELIRAHFDLRPGAIIRDLDLRRPIYKAVSVYGHFGRPDLDLPWERLDKVEALRADAGL</sequence>
<reference key="1">
    <citation type="journal article" date="2008" name="Environ. Microbiol.">
        <title>The complete genome sequence of Moorella thermoacetica (f. Clostridium thermoaceticum).</title>
        <authorList>
            <person name="Pierce E."/>
            <person name="Xie G."/>
            <person name="Barabote R.D."/>
            <person name="Saunders E."/>
            <person name="Han C.S."/>
            <person name="Detter J.C."/>
            <person name="Richardson P."/>
            <person name="Brettin T.S."/>
            <person name="Das A."/>
            <person name="Ljungdahl L.G."/>
            <person name="Ragsdale S.W."/>
        </authorList>
    </citation>
    <scope>NUCLEOTIDE SEQUENCE [LARGE SCALE GENOMIC DNA]</scope>
    <source>
        <strain>ATCC 39073 / JCM 9320</strain>
    </source>
</reference>
<protein>
    <recommendedName>
        <fullName evidence="1">S-adenosylmethionine synthase</fullName>
        <shortName evidence="1">AdoMet synthase</shortName>
        <ecNumber evidence="1">2.5.1.6</ecNumber>
    </recommendedName>
    <alternativeName>
        <fullName evidence="1">MAT</fullName>
    </alternativeName>
    <alternativeName>
        <fullName evidence="1">Methionine adenosyltransferase</fullName>
    </alternativeName>
</protein>
<dbReference type="EC" id="2.5.1.6" evidence="1"/>
<dbReference type="EMBL" id="CP000232">
    <property type="protein sequence ID" value="ABC19211.1"/>
    <property type="molecule type" value="Genomic_DNA"/>
</dbReference>
<dbReference type="RefSeq" id="YP_429754.1">
    <property type="nucleotide sequence ID" value="NC_007644.1"/>
</dbReference>
<dbReference type="SMR" id="Q2RK28"/>
<dbReference type="STRING" id="264732.Moth_0894"/>
<dbReference type="EnsemblBacteria" id="ABC19211">
    <property type="protein sequence ID" value="ABC19211"/>
    <property type="gene ID" value="Moth_0894"/>
</dbReference>
<dbReference type="KEGG" id="mta:Moth_0894"/>
<dbReference type="PATRIC" id="fig|264732.11.peg.961"/>
<dbReference type="eggNOG" id="COG0192">
    <property type="taxonomic scope" value="Bacteria"/>
</dbReference>
<dbReference type="HOGENOM" id="CLU_041802_1_1_9"/>
<dbReference type="OrthoDB" id="9801686at2"/>
<dbReference type="UniPathway" id="UPA00315">
    <property type="reaction ID" value="UER00080"/>
</dbReference>
<dbReference type="GO" id="GO:0005737">
    <property type="term" value="C:cytoplasm"/>
    <property type="evidence" value="ECO:0007669"/>
    <property type="project" value="UniProtKB-SubCell"/>
</dbReference>
<dbReference type="GO" id="GO:0005524">
    <property type="term" value="F:ATP binding"/>
    <property type="evidence" value="ECO:0007669"/>
    <property type="project" value="UniProtKB-UniRule"/>
</dbReference>
<dbReference type="GO" id="GO:0000287">
    <property type="term" value="F:magnesium ion binding"/>
    <property type="evidence" value="ECO:0007669"/>
    <property type="project" value="UniProtKB-UniRule"/>
</dbReference>
<dbReference type="GO" id="GO:0004478">
    <property type="term" value="F:methionine adenosyltransferase activity"/>
    <property type="evidence" value="ECO:0007669"/>
    <property type="project" value="UniProtKB-UniRule"/>
</dbReference>
<dbReference type="GO" id="GO:0006730">
    <property type="term" value="P:one-carbon metabolic process"/>
    <property type="evidence" value="ECO:0007669"/>
    <property type="project" value="UniProtKB-KW"/>
</dbReference>
<dbReference type="GO" id="GO:0006556">
    <property type="term" value="P:S-adenosylmethionine biosynthetic process"/>
    <property type="evidence" value="ECO:0007669"/>
    <property type="project" value="UniProtKB-UniRule"/>
</dbReference>
<dbReference type="CDD" id="cd18079">
    <property type="entry name" value="S-AdoMet_synt"/>
    <property type="match status" value="1"/>
</dbReference>
<dbReference type="FunFam" id="3.30.300.10:FF:000003">
    <property type="entry name" value="S-adenosylmethionine synthase"/>
    <property type="match status" value="1"/>
</dbReference>
<dbReference type="FunFam" id="3.30.300.10:FF:000004">
    <property type="entry name" value="S-adenosylmethionine synthase"/>
    <property type="match status" value="1"/>
</dbReference>
<dbReference type="Gene3D" id="3.30.300.10">
    <property type="match status" value="3"/>
</dbReference>
<dbReference type="HAMAP" id="MF_00086">
    <property type="entry name" value="S_AdoMet_synth1"/>
    <property type="match status" value="1"/>
</dbReference>
<dbReference type="InterPro" id="IPR022631">
    <property type="entry name" value="ADOMET_SYNTHASE_CS"/>
</dbReference>
<dbReference type="InterPro" id="IPR022630">
    <property type="entry name" value="S-AdoMet_synt_C"/>
</dbReference>
<dbReference type="InterPro" id="IPR022629">
    <property type="entry name" value="S-AdoMet_synt_central"/>
</dbReference>
<dbReference type="InterPro" id="IPR022628">
    <property type="entry name" value="S-AdoMet_synt_N"/>
</dbReference>
<dbReference type="InterPro" id="IPR002133">
    <property type="entry name" value="S-AdoMet_synthetase"/>
</dbReference>
<dbReference type="InterPro" id="IPR022636">
    <property type="entry name" value="S-AdoMet_synthetase_sfam"/>
</dbReference>
<dbReference type="NCBIfam" id="TIGR01034">
    <property type="entry name" value="metK"/>
    <property type="match status" value="1"/>
</dbReference>
<dbReference type="PANTHER" id="PTHR11964">
    <property type="entry name" value="S-ADENOSYLMETHIONINE SYNTHETASE"/>
    <property type="match status" value="1"/>
</dbReference>
<dbReference type="Pfam" id="PF02773">
    <property type="entry name" value="S-AdoMet_synt_C"/>
    <property type="match status" value="1"/>
</dbReference>
<dbReference type="Pfam" id="PF02772">
    <property type="entry name" value="S-AdoMet_synt_M"/>
    <property type="match status" value="1"/>
</dbReference>
<dbReference type="Pfam" id="PF00438">
    <property type="entry name" value="S-AdoMet_synt_N"/>
    <property type="match status" value="1"/>
</dbReference>
<dbReference type="PIRSF" id="PIRSF000497">
    <property type="entry name" value="MAT"/>
    <property type="match status" value="1"/>
</dbReference>
<dbReference type="SUPFAM" id="SSF55973">
    <property type="entry name" value="S-adenosylmethionine synthetase"/>
    <property type="match status" value="3"/>
</dbReference>
<dbReference type="PROSITE" id="PS00376">
    <property type="entry name" value="ADOMET_SYNTHASE_1"/>
    <property type="match status" value="1"/>
</dbReference>
<comment type="function">
    <text evidence="1">Catalyzes the formation of S-adenosylmethionine (AdoMet) from methionine and ATP. The overall synthetic reaction is composed of two sequential steps, AdoMet formation and the subsequent tripolyphosphate hydrolysis which occurs prior to release of AdoMet from the enzyme.</text>
</comment>
<comment type="catalytic activity">
    <reaction evidence="1">
        <text>L-methionine + ATP + H2O = S-adenosyl-L-methionine + phosphate + diphosphate</text>
        <dbReference type="Rhea" id="RHEA:21080"/>
        <dbReference type="ChEBI" id="CHEBI:15377"/>
        <dbReference type="ChEBI" id="CHEBI:30616"/>
        <dbReference type="ChEBI" id="CHEBI:33019"/>
        <dbReference type="ChEBI" id="CHEBI:43474"/>
        <dbReference type="ChEBI" id="CHEBI:57844"/>
        <dbReference type="ChEBI" id="CHEBI:59789"/>
        <dbReference type="EC" id="2.5.1.6"/>
    </reaction>
</comment>
<comment type="cofactor">
    <cofactor evidence="1">
        <name>Mg(2+)</name>
        <dbReference type="ChEBI" id="CHEBI:18420"/>
    </cofactor>
    <text evidence="1">Binds 2 divalent ions per subunit.</text>
</comment>
<comment type="cofactor">
    <cofactor evidence="1">
        <name>K(+)</name>
        <dbReference type="ChEBI" id="CHEBI:29103"/>
    </cofactor>
    <text evidence="1">Binds 1 potassium ion per subunit.</text>
</comment>
<comment type="pathway">
    <text evidence="1">Amino-acid biosynthesis; S-adenosyl-L-methionine biosynthesis; S-adenosyl-L-methionine from L-methionine: step 1/1.</text>
</comment>
<comment type="subunit">
    <text evidence="1">Homotetramer; dimer of dimers.</text>
</comment>
<comment type="subcellular location">
    <subcellularLocation>
        <location evidence="1">Cytoplasm</location>
    </subcellularLocation>
</comment>
<comment type="similarity">
    <text evidence="1">Belongs to the AdoMet synthase family.</text>
</comment>